<reference key="1">
    <citation type="journal article" date="2004" name="J. Infect. Dis.">
        <title>Progress toward characterization of the group A Streptococcus metagenome: complete genome sequence of a macrolide-resistant serotype M6 strain.</title>
        <authorList>
            <person name="Banks D.J."/>
            <person name="Porcella S.F."/>
            <person name="Barbian K.D."/>
            <person name="Beres S.B."/>
            <person name="Philips L.E."/>
            <person name="Voyich J.M."/>
            <person name="DeLeo F.R."/>
            <person name="Martin J.M."/>
            <person name="Somerville G.A."/>
            <person name="Musser J.M."/>
        </authorList>
    </citation>
    <scope>NUCLEOTIDE SEQUENCE [LARGE SCALE GENOMIC DNA]</scope>
    <source>
        <strain>ATCC BAA-946 / MGAS10394</strain>
    </source>
</reference>
<reference key="2">
    <citation type="submission" date="2000-05" db="UniProtKB">
        <title>Two-dimensional gel electrophoresis map of Streptococcus pyogenes proteins.</title>
        <authorList>
            <person name="Hogan D.A."/>
            <person name="Du P."/>
            <person name="Stevenson T.I."/>
            <person name="Whitton M."/>
            <person name="Kilby G.W."/>
            <person name="Rogers J."/>
            <person name="VanBogelen R.A."/>
        </authorList>
    </citation>
    <scope>PROTEIN SEQUENCE OF 27-42; 46-60 AND 97-104</scope>
    <scope>IDENTIFICATION BY MASS SPECTROMETRY</scope>
    <source>
        <strain>JRS4 / Serotype M6</strain>
    </source>
</reference>
<name>RPOZ_STRP6</name>
<sequence>MLKPSIDTLLDKVPSKYSLVILQAKRAHELEAGATPTQEFKSVKSTLQALEEIESGNVVIHPDPSAKREAVRAKIEAERLAKEEEERKIKEQIAKEKEEEGEKI</sequence>
<feature type="chain" id="PRO_0000128997" description="DNA-directed RNA polymerase subunit omega">
    <location>
        <begin position="1"/>
        <end position="104"/>
    </location>
</feature>
<protein>
    <recommendedName>
        <fullName>DNA-directed RNA polymerase subunit omega</fullName>
        <shortName>RNAP omega subunit</shortName>
        <ecNumber>2.7.7.6</ecNumber>
    </recommendedName>
    <alternativeName>
        <fullName>RNA polymerase omega subunit</fullName>
    </alternativeName>
    <alternativeName>
        <fullName>Transcriptase subunit omega</fullName>
    </alternativeName>
</protein>
<accession>Q5XAP2</accession>
<accession>P82577</accession>
<evidence type="ECO:0000250" key="1"/>
<evidence type="ECO:0000305" key="2"/>
<organism>
    <name type="scientific">Streptococcus pyogenes serotype M6 (strain ATCC BAA-946 / MGAS10394)</name>
    <dbReference type="NCBI Taxonomy" id="286636"/>
    <lineage>
        <taxon>Bacteria</taxon>
        <taxon>Bacillati</taxon>
        <taxon>Bacillota</taxon>
        <taxon>Bacilli</taxon>
        <taxon>Lactobacillales</taxon>
        <taxon>Streptococcaceae</taxon>
        <taxon>Streptococcus</taxon>
    </lineage>
</organism>
<comment type="function">
    <text evidence="1">Promotes RNA polymerase assembly. Latches the N- and C-terminal regions of the beta' subunit thereby facilitating its interaction with the beta and alpha subunits (By similarity).</text>
</comment>
<comment type="catalytic activity">
    <reaction>
        <text>RNA(n) + a ribonucleoside 5'-triphosphate = RNA(n+1) + diphosphate</text>
        <dbReference type="Rhea" id="RHEA:21248"/>
        <dbReference type="Rhea" id="RHEA-COMP:14527"/>
        <dbReference type="Rhea" id="RHEA-COMP:17342"/>
        <dbReference type="ChEBI" id="CHEBI:33019"/>
        <dbReference type="ChEBI" id="CHEBI:61557"/>
        <dbReference type="ChEBI" id="CHEBI:140395"/>
        <dbReference type="EC" id="2.7.7.6"/>
    </reaction>
</comment>
<comment type="subunit">
    <text evidence="1">The RNAP catalytic core consists of 2 alpha, 1 beta, 1 beta' and 1 omega subunit. When a sigma factor is associated with the core the holoenzyme is formed, which can initiate transcription (By similarity).</text>
</comment>
<comment type="similarity">
    <text evidence="2">Belongs to the RNA polymerase subunit omega family.</text>
</comment>
<comment type="sequence caution" evidence="2">
    <conflict type="erroneous initiation">
        <sequence resource="EMBL-CDS" id="AAT87521"/>
    </conflict>
</comment>
<gene>
    <name type="primary">rpoZ</name>
    <name type="ordered locus">M6_Spy1386</name>
</gene>
<keyword id="KW-0903">Direct protein sequencing</keyword>
<keyword id="KW-0240">DNA-directed RNA polymerase</keyword>
<keyword id="KW-0548">Nucleotidyltransferase</keyword>
<keyword id="KW-0804">Transcription</keyword>
<keyword id="KW-0808">Transferase</keyword>
<dbReference type="EC" id="2.7.7.6"/>
<dbReference type="EMBL" id="CP000003">
    <property type="protein sequence ID" value="AAT87521.1"/>
    <property type="status" value="ALT_INIT"/>
    <property type="molecule type" value="Genomic_DNA"/>
</dbReference>
<dbReference type="SMR" id="Q5XAP2"/>
<dbReference type="KEGG" id="spa:M6_Spy1386"/>
<dbReference type="HOGENOM" id="CLU_125406_0_0_9"/>
<dbReference type="Proteomes" id="UP000001167">
    <property type="component" value="Chromosome"/>
</dbReference>
<dbReference type="GO" id="GO:0000428">
    <property type="term" value="C:DNA-directed RNA polymerase complex"/>
    <property type="evidence" value="ECO:0007669"/>
    <property type="project" value="UniProtKB-KW"/>
</dbReference>
<dbReference type="GO" id="GO:0003677">
    <property type="term" value="F:DNA binding"/>
    <property type="evidence" value="ECO:0007669"/>
    <property type="project" value="UniProtKB-UniRule"/>
</dbReference>
<dbReference type="GO" id="GO:0003899">
    <property type="term" value="F:DNA-directed RNA polymerase activity"/>
    <property type="evidence" value="ECO:0007669"/>
    <property type="project" value="UniProtKB-UniRule"/>
</dbReference>
<dbReference type="GO" id="GO:0006351">
    <property type="term" value="P:DNA-templated transcription"/>
    <property type="evidence" value="ECO:0007669"/>
    <property type="project" value="UniProtKB-UniRule"/>
</dbReference>
<dbReference type="Gene3D" id="3.90.940.10">
    <property type="match status" value="1"/>
</dbReference>
<dbReference type="HAMAP" id="MF_00366">
    <property type="entry name" value="RNApol_bact_RpoZ"/>
    <property type="match status" value="1"/>
</dbReference>
<dbReference type="InterPro" id="IPR003716">
    <property type="entry name" value="DNA-dir_RNA_pol_omega"/>
</dbReference>
<dbReference type="InterPro" id="IPR006110">
    <property type="entry name" value="Pol_omega/Rpo6/RPB6"/>
</dbReference>
<dbReference type="InterPro" id="IPR036161">
    <property type="entry name" value="RPB6/omega-like_sf"/>
</dbReference>
<dbReference type="NCBIfam" id="TIGR00690">
    <property type="entry name" value="rpoZ"/>
    <property type="match status" value="1"/>
</dbReference>
<dbReference type="PANTHER" id="PTHR34476">
    <property type="entry name" value="DNA-DIRECTED RNA POLYMERASE SUBUNIT OMEGA"/>
    <property type="match status" value="1"/>
</dbReference>
<dbReference type="PANTHER" id="PTHR34476:SF1">
    <property type="entry name" value="DNA-DIRECTED RNA POLYMERASE SUBUNIT OMEGA"/>
    <property type="match status" value="1"/>
</dbReference>
<dbReference type="Pfam" id="PF01192">
    <property type="entry name" value="RNA_pol_Rpb6"/>
    <property type="match status" value="1"/>
</dbReference>
<dbReference type="SMART" id="SM01409">
    <property type="entry name" value="RNA_pol_Rpb6"/>
    <property type="match status" value="1"/>
</dbReference>
<dbReference type="SUPFAM" id="SSF63562">
    <property type="entry name" value="RPB6/omega subunit-like"/>
    <property type="match status" value="1"/>
</dbReference>
<proteinExistence type="evidence at protein level"/>